<accession>Q1J569</accession>
<name>GATA_STRPF</name>
<gene>
    <name evidence="1" type="primary">gatA</name>
    <name type="ordered locus">MGAS10750_Spy1567</name>
</gene>
<reference key="1">
    <citation type="journal article" date="2006" name="Proc. Natl. Acad. Sci. U.S.A.">
        <title>Molecular genetic anatomy of inter- and intraserotype variation in the human bacterial pathogen group A Streptococcus.</title>
        <authorList>
            <person name="Beres S.B."/>
            <person name="Richter E.W."/>
            <person name="Nagiec M.J."/>
            <person name="Sumby P."/>
            <person name="Porcella S.F."/>
            <person name="DeLeo F.R."/>
            <person name="Musser J.M."/>
        </authorList>
    </citation>
    <scope>NUCLEOTIDE SEQUENCE [LARGE SCALE GENOMIC DNA]</scope>
    <source>
        <strain>MGAS10750</strain>
    </source>
</reference>
<keyword id="KW-0067">ATP-binding</keyword>
<keyword id="KW-0436">Ligase</keyword>
<keyword id="KW-0547">Nucleotide-binding</keyword>
<keyword id="KW-0648">Protein biosynthesis</keyword>
<organism>
    <name type="scientific">Streptococcus pyogenes serotype M4 (strain MGAS10750)</name>
    <dbReference type="NCBI Taxonomy" id="370554"/>
    <lineage>
        <taxon>Bacteria</taxon>
        <taxon>Bacillati</taxon>
        <taxon>Bacillota</taxon>
        <taxon>Bacilli</taxon>
        <taxon>Lactobacillales</taxon>
        <taxon>Streptococcaceae</taxon>
        <taxon>Streptococcus</taxon>
    </lineage>
</organism>
<evidence type="ECO:0000255" key="1">
    <source>
        <dbReference type="HAMAP-Rule" id="MF_00120"/>
    </source>
</evidence>
<comment type="function">
    <text evidence="1">Allows the formation of correctly charged Gln-tRNA(Gln) through the transamidation of misacylated Glu-tRNA(Gln) in organisms which lack glutaminyl-tRNA synthetase. The reaction takes place in the presence of glutamine and ATP through an activated gamma-phospho-Glu-tRNA(Gln).</text>
</comment>
<comment type="catalytic activity">
    <reaction evidence="1">
        <text>L-glutamyl-tRNA(Gln) + L-glutamine + ATP + H2O = L-glutaminyl-tRNA(Gln) + L-glutamate + ADP + phosphate + H(+)</text>
        <dbReference type="Rhea" id="RHEA:17521"/>
        <dbReference type="Rhea" id="RHEA-COMP:9681"/>
        <dbReference type="Rhea" id="RHEA-COMP:9684"/>
        <dbReference type="ChEBI" id="CHEBI:15377"/>
        <dbReference type="ChEBI" id="CHEBI:15378"/>
        <dbReference type="ChEBI" id="CHEBI:29985"/>
        <dbReference type="ChEBI" id="CHEBI:30616"/>
        <dbReference type="ChEBI" id="CHEBI:43474"/>
        <dbReference type="ChEBI" id="CHEBI:58359"/>
        <dbReference type="ChEBI" id="CHEBI:78520"/>
        <dbReference type="ChEBI" id="CHEBI:78521"/>
        <dbReference type="ChEBI" id="CHEBI:456216"/>
        <dbReference type="EC" id="6.3.5.7"/>
    </reaction>
</comment>
<comment type="subunit">
    <text evidence="1">Heterotrimer of A, B and C subunits.</text>
</comment>
<comment type="similarity">
    <text evidence="1">Belongs to the amidase family. GatA subfamily.</text>
</comment>
<protein>
    <recommendedName>
        <fullName evidence="1">Glutamyl-tRNA(Gln) amidotransferase subunit A</fullName>
        <shortName evidence="1">Glu-ADT subunit A</shortName>
        <ecNumber evidence="1">6.3.5.7</ecNumber>
    </recommendedName>
</protein>
<sequence length="488" mass="52235">MSFNHKTIEELHDLLVAKEISATELTQKTLEDIKSREEAVGSFITVSEEAALKQAAAIDAKGIDADNLMSGIPLAVKDNISTKGILTTAASKMLYNYEPIFDATSVANAYAKDMIVIGKTNMDEFAMGGSTETSYFKKTKNAWDHTKVPGGSSGGSATAVASGQVRLSLGSDTGGSIRQPAAFNGVVGLKPTYGTVSRYGLIAFGSSLDQIGPFAPTVKENAQLLNVIASSDVKDATSAPVRIADYTSKIGRDIKGMKIALPKEYLGEGIDPEIKETVLAAAKQFEALGATVEEVSLPHSKYGVAVYYIIASSEASSNLQRFDGIRYGFRADDAKNLDEIYVNTRSQGFGDEVKRRIMLGTFSLSSGYYDAYFKKAGQVRTLIIEDFDKVFADYDLILGPTTPTVAFGLDTLNHDPVAMYLADLLTIPVNLAGLPGISIPAGFVDGLPVGLQLIGPKYTEETIYQAAAAFEAVTDYHKQQPIIFGGDK</sequence>
<dbReference type="EC" id="6.3.5.7" evidence="1"/>
<dbReference type="EMBL" id="CP000262">
    <property type="protein sequence ID" value="ABF38517.1"/>
    <property type="molecule type" value="Genomic_DNA"/>
</dbReference>
<dbReference type="SMR" id="Q1J569"/>
<dbReference type="KEGG" id="spi:MGAS10750_Spy1567"/>
<dbReference type="HOGENOM" id="CLU_009600_0_3_9"/>
<dbReference type="Proteomes" id="UP000002434">
    <property type="component" value="Chromosome"/>
</dbReference>
<dbReference type="GO" id="GO:0030956">
    <property type="term" value="C:glutamyl-tRNA(Gln) amidotransferase complex"/>
    <property type="evidence" value="ECO:0007669"/>
    <property type="project" value="InterPro"/>
</dbReference>
<dbReference type="GO" id="GO:0005524">
    <property type="term" value="F:ATP binding"/>
    <property type="evidence" value="ECO:0007669"/>
    <property type="project" value="UniProtKB-KW"/>
</dbReference>
<dbReference type="GO" id="GO:0050567">
    <property type="term" value="F:glutaminyl-tRNA synthase (glutamine-hydrolyzing) activity"/>
    <property type="evidence" value="ECO:0007669"/>
    <property type="project" value="UniProtKB-UniRule"/>
</dbReference>
<dbReference type="GO" id="GO:0006412">
    <property type="term" value="P:translation"/>
    <property type="evidence" value="ECO:0007669"/>
    <property type="project" value="UniProtKB-UniRule"/>
</dbReference>
<dbReference type="Gene3D" id="3.90.1300.10">
    <property type="entry name" value="Amidase signature (AS) domain"/>
    <property type="match status" value="1"/>
</dbReference>
<dbReference type="HAMAP" id="MF_00120">
    <property type="entry name" value="GatA"/>
    <property type="match status" value="1"/>
</dbReference>
<dbReference type="InterPro" id="IPR000120">
    <property type="entry name" value="Amidase"/>
</dbReference>
<dbReference type="InterPro" id="IPR020556">
    <property type="entry name" value="Amidase_CS"/>
</dbReference>
<dbReference type="InterPro" id="IPR023631">
    <property type="entry name" value="Amidase_dom"/>
</dbReference>
<dbReference type="InterPro" id="IPR036928">
    <property type="entry name" value="AS_sf"/>
</dbReference>
<dbReference type="InterPro" id="IPR004412">
    <property type="entry name" value="GatA"/>
</dbReference>
<dbReference type="NCBIfam" id="TIGR00132">
    <property type="entry name" value="gatA"/>
    <property type="match status" value="1"/>
</dbReference>
<dbReference type="PANTHER" id="PTHR11895:SF151">
    <property type="entry name" value="GLUTAMYL-TRNA(GLN) AMIDOTRANSFERASE SUBUNIT A"/>
    <property type="match status" value="1"/>
</dbReference>
<dbReference type="PANTHER" id="PTHR11895">
    <property type="entry name" value="TRANSAMIDASE"/>
    <property type="match status" value="1"/>
</dbReference>
<dbReference type="Pfam" id="PF01425">
    <property type="entry name" value="Amidase"/>
    <property type="match status" value="1"/>
</dbReference>
<dbReference type="SUPFAM" id="SSF75304">
    <property type="entry name" value="Amidase signature (AS) enzymes"/>
    <property type="match status" value="1"/>
</dbReference>
<dbReference type="PROSITE" id="PS00571">
    <property type="entry name" value="AMIDASES"/>
    <property type="match status" value="1"/>
</dbReference>
<proteinExistence type="inferred from homology"/>
<feature type="chain" id="PRO_1000015914" description="Glutamyl-tRNA(Gln) amidotransferase subunit A">
    <location>
        <begin position="1"/>
        <end position="488"/>
    </location>
</feature>
<feature type="active site" description="Charge relay system" evidence="1">
    <location>
        <position position="77"/>
    </location>
</feature>
<feature type="active site" description="Charge relay system" evidence="1">
    <location>
        <position position="152"/>
    </location>
</feature>
<feature type="active site" description="Acyl-ester intermediate" evidence="1">
    <location>
        <position position="176"/>
    </location>
</feature>